<name>CLD2_HUMAN</name>
<keyword id="KW-0002">3D-structure</keyword>
<keyword id="KW-0965">Cell junction</keyword>
<keyword id="KW-1003">Cell membrane</keyword>
<keyword id="KW-0225">Disease variant</keyword>
<keyword id="KW-1015">Disulfide bond</keyword>
<keyword id="KW-1017">Isopeptide bond</keyword>
<keyword id="KW-0472">Membrane</keyword>
<keyword id="KW-0597">Phosphoprotein</keyword>
<keyword id="KW-1267">Proteomics identification</keyword>
<keyword id="KW-1185">Reference proteome</keyword>
<keyword id="KW-0796">Tight junction</keyword>
<keyword id="KW-0812">Transmembrane</keyword>
<keyword id="KW-1133">Transmembrane helix</keyword>
<keyword id="KW-0832">Ubl conjugation</keyword>
<proteinExistence type="evidence at protein level"/>
<gene>
    <name evidence="10 12" type="primary">CLDN2</name>
    <name type="ORF">PSEC0059</name>
    <name type="ORF">SP82</name>
    <name type="ORF">UNQ705/PRO1356</name>
</gene>
<organism>
    <name type="scientific">Homo sapiens</name>
    <name type="common">Human</name>
    <dbReference type="NCBI Taxonomy" id="9606"/>
    <lineage>
        <taxon>Eukaryota</taxon>
        <taxon>Metazoa</taxon>
        <taxon>Chordata</taxon>
        <taxon>Craniata</taxon>
        <taxon>Vertebrata</taxon>
        <taxon>Euteleostomi</taxon>
        <taxon>Mammalia</taxon>
        <taxon>Eutheria</taxon>
        <taxon>Euarchontoglires</taxon>
        <taxon>Primates</taxon>
        <taxon>Haplorrhini</taxon>
        <taxon>Catarrhini</taxon>
        <taxon>Hominidae</taxon>
        <taxon>Homo</taxon>
    </lineage>
</organism>
<protein>
    <recommendedName>
        <fullName evidence="9">Claudin-2</fullName>
    </recommendedName>
    <alternativeName>
        <fullName>SP82</fullName>
    </alternativeName>
</protein>
<reference key="1">
    <citation type="journal article" date="2002" name="J. Biol. Chem.">
        <title>Cloning of the human claudin-2 5'-flanking region revealed a TATA-less promoter with conserved binding sites in mouse and human for caudal-related homeodomain proteins and hepatocyte nuclear factor-1alpha.</title>
        <authorList>
            <person name="Sakaguchi T."/>
            <person name="Gu X."/>
            <person name="Golden H.M."/>
            <person name="Suh E."/>
            <person name="Rhoads D.B."/>
            <person name="Reinecker H.-C."/>
        </authorList>
    </citation>
    <scope>NUCLEOTIDE SEQUENCE [MRNA]</scope>
    <source>
        <tissue>Colon epithelium</tissue>
    </source>
</reference>
<reference key="2">
    <citation type="journal article" date="2003" name="Genome Res.">
        <title>The secreted protein discovery initiative (SPDI), a large-scale effort to identify novel human secreted and transmembrane proteins: a bioinformatics assessment.</title>
        <authorList>
            <person name="Clark H.F."/>
            <person name="Gurney A.L."/>
            <person name="Abaya E."/>
            <person name="Baker K."/>
            <person name="Baldwin D.T."/>
            <person name="Brush J."/>
            <person name="Chen J."/>
            <person name="Chow B."/>
            <person name="Chui C."/>
            <person name="Crowley C."/>
            <person name="Currell B."/>
            <person name="Deuel B."/>
            <person name="Dowd P."/>
            <person name="Eaton D."/>
            <person name="Foster J.S."/>
            <person name="Grimaldi C."/>
            <person name="Gu Q."/>
            <person name="Hass P.E."/>
            <person name="Heldens S."/>
            <person name="Huang A."/>
            <person name="Kim H.S."/>
            <person name="Klimowski L."/>
            <person name="Jin Y."/>
            <person name="Johnson S."/>
            <person name="Lee J."/>
            <person name="Lewis L."/>
            <person name="Liao D."/>
            <person name="Mark M.R."/>
            <person name="Robbie E."/>
            <person name="Sanchez C."/>
            <person name="Schoenfeld J."/>
            <person name="Seshagiri S."/>
            <person name="Simmons L."/>
            <person name="Singh J."/>
            <person name="Smith V."/>
            <person name="Stinson J."/>
            <person name="Vagts A."/>
            <person name="Vandlen R.L."/>
            <person name="Watanabe C."/>
            <person name="Wieand D."/>
            <person name="Woods K."/>
            <person name="Xie M.-H."/>
            <person name="Yansura D.G."/>
            <person name="Yi S."/>
            <person name="Yu G."/>
            <person name="Yuan J."/>
            <person name="Zhang M."/>
            <person name="Zhang Z."/>
            <person name="Goddard A.D."/>
            <person name="Wood W.I."/>
            <person name="Godowski P.J."/>
            <person name="Gray A.M."/>
        </authorList>
    </citation>
    <scope>NUCLEOTIDE SEQUENCE [LARGE SCALE MRNA]</scope>
</reference>
<reference key="3">
    <citation type="journal article" date="2004" name="Nat. Genet.">
        <title>Complete sequencing and characterization of 21,243 full-length human cDNAs.</title>
        <authorList>
            <person name="Ota T."/>
            <person name="Suzuki Y."/>
            <person name="Nishikawa T."/>
            <person name="Otsuki T."/>
            <person name="Sugiyama T."/>
            <person name="Irie R."/>
            <person name="Wakamatsu A."/>
            <person name="Hayashi K."/>
            <person name="Sato H."/>
            <person name="Nagai K."/>
            <person name="Kimura K."/>
            <person name="Makita H."/>
            <person name="Sekine M."/>
            <person name="Obayashi M."/>
            <person name="Nishi T."/>
            <person name="Shibahara T."/>
            <person name="Tanaka T."/>
            <person name="Ishii S."/>
            <person name="Yamamoto J."/>
            <person name="Saito K."/>
            <person name="Kawai Y."/>
            <person name="Isono Y."/>
            <person name="Nakamura Y."/>
            <person name="Nagahari K."/>
            <person name="Murakami K."/>
            <person name="Yasuda T."/>
            <person name="Iwayanagi T."/>
            <person name="Wagatsuma M."/>
            <person name="Shiratori A."/>
            <person name="Sudo H."/>
            <person name="Hosoiri T."/>
            <person name="Kaku Y."/>
            <person name="Kodaira H."/>
            <person name="Kondo H."/>
            <person name="Sugawara M."/>
            <person name="Takahashi M."/>
            <person name="Kanda K."/>
            <person name="Yokoi T."/>
            <person name="Furuya T."/>
            <person name="Kikkawa E."/>
            <person name="Omura Y."/>
            <person name="Abe K."/>
            <person name="Kamihara K."/>
            <person name="Katsuta N."/>
            <person name="Sato K."/>
            <person name="Tanikawa M."/>
            <person name="Yamazaki M."/>
            <person name="Ninomiya K."/>
            <person name="Ishibashi T."/>
            <person name="Yamashita H."/>
            <person name="Murakawa K."/>
            <person name="Fujimori K."/>
            <person name="Tanai H."/>
            <person name="Kimata M."/>
            <person name="Watanabe M."/>
            <person name="Hiraoka S."/>
            <person name="Chiba Y."/>
            <person name="Ishida S."/>
            <person name="Ono Y."/>
            <person name="Takiguchi S."/>
            <person name="Watanabe S."/>
            <person name="Yosida M."/>
            <person name="Hotuta T."/>
            <person name="Kusano J."/>
            <person name="Kanehori K."/>
            <person name="Takahashi-Fujii A."/>
            <person name="Hara H."/>
            <person name="Tanase T.-O."/>
            <person name="Nomura Y."/>
            <person name="Togiya S."/>
            <person name="Komai F."/>
            <person name="Hara R."/>
            <person name="Takeuchi K."/>
            <person name="Arita M."/>
            <person name="Imose N."/>
            <person name="Musashino K."/>
            <person name="Yuuki H."/>
            <person name="Oshima A."/>
            <person name="Sasaki N."/>
            <person name="Aotsuka S."/>
            <person name="Yoshikawa Y."/>
            <person name="Matsunawa H."/>
            <person name="Ichihara T."/>
            <person name="Shiohata N."/>
            <person name="Sano S."/>
            <person name="Moriya S."/>
            <person name="Momiyama H."/>
            <person name="Satoh N."/>
            <person name="Takami S."/>
            <person name="Terashima Y."/>
            <person name="Suzuki O."/>
            <person name="Nakagawa S."/>
            <person name="Senoh A."/>
            <person name="Mizoguchi H."/>
            <person name="Goto Y."/>
            <person name="Shimizu F."/>
            <person name="Wakebe H."/>
            <person name="Hishigaki H."/>
            <person name="Watanabe T."/>
            <person name="Sugiyama A."/>
            <person name="Takemoto M."/>
            <person name="Kawakami B."/>
            <person name="Yamazaki M."/>
            <person name="Watanabe K."/>
            <person name="Kumagai A."/>
            <person name="Itakura S."/>
            <person name="Fukuzumi Y."/>
            <person name="Fujimori Y."/>
            <person name="Komiyama M."/>
            <person name="Tashiro H."/>
            <person name="Tanigami A."/>
            <person name="Fujiwara T."/>
            <person name="Ono T."/>
            <person name="Yamada K."/>
            <person name="Fujii Y."/>
            <person name="Ozaki K."/>
            <person name="Hirao M."/>
            <person name="Ohmori Y."/>
            <person name="Kawabata A."/>
            <person name="Hikiji T."/>
            <person name="Kobatake N."/>
            <person name="Inagaki H."/>
            <person name="Ikema Y."/>
            <person name="Okamoto S."/>
            <person name="Okitani R."/>
            <person name="Kawakami T."/>
            <person name="Noguchi S."/>
            <person name="Itoh T."/>
            <person name="Shigeta K."/>
            <person name="Senba T."/>
            <person name="Matsumura K."/>
            <person name="Nakajima Y."/>
            <person name="Mizuno T."/>
            <person name="Morinaga M."/>
            <person name="Sasaki M."/>
            <person name="Togashi T."/>
            <person name="Oyama M."/>
            <person name="Hata H."/>
            <person name="Watanabe M."/>
            <person name="Komatsu T."/>
            <person name="Mizushima-Sugano J."/>
            <person name="Satoh T."/>
            <person name="Shirai Y."/>
            <person name="Takahashi Y."/>
            <person name="Nakagawa K."/>
            <person name="Okumura K."/>
            <person name="Nagase T."/>
            <person name="Nomura N."/>
            <person name="Kikuchi H."/>
            <person name="Masuho Y."/>
            <person name="Yamashita R."/>
            <person name="Nakai K."/>
            <person name="Yada T."/>
            <person name="Nakamura Y."/>
            <person name="Ohara O."/>
            <person name="Isogai T."/>
            <person name="Sugano S."/>
        </authorList>
    </citation>
    <scope>NUCLEOTIDE SEQUENCE [LARGE SCALE MRNA]</scope>
    <source>
        <tissue>Thalamus</tissue>
    </source>
</reference>
<reference key="4">
    <citation type="journal article" date="2004" name="Proc. Natl. Acad. Sci. U.S.A.">
        <title>Large-scale cDNA transfection screening for genes related to cancer development and progression.</title>
        <authorList>
            <person name="Wan D."/>
            <person name="Gong Y."/>
            <person name="Qin W."/>
            <person name="Zhang P."/>
            <person name="Li J."/>
            <person name="Wei L."/>
            <person name="Zhou X."/>
            <person name="Li H."/>
            <person name="Qiu X."/>
            <person name="Zhong F."/>
            <person name="He L."/>
            <person name="Yu J."/>
            <person name="Yao G."/>
            <person name="Jiang H."/>
            <person name="Qian L."/>
            <person name="Yu Y."/>
            <person name="Shu H."/>
            <person name="Chen X."/>
            <person name="Xu H."/>
            <person name="Guo M."/>
            <person name="Pan Z."/>
            <person name="Chen Y."/>
            <person name="Ge C."/>
            <person name="Yang S."/>
            <person name="Gu J."/>
        </authorList>
    </citation>
    <scope>NUCLEOTIDE SEQUENCE [LARGE SCALE MRNA]</scope>
</reference>
<reference key="5">
    <citation type="journal article" date="2005" name="DNA Res.">
        <title>Signal sequence and keyword trap in silico for selection of full-length human cDNAs encoding secretion or membrane proteins from oligo-capped cDNA libraries.</title>
        <authorList>
            <person name="Otsuki T."/>
            <person name="Ota T."/>
            <person name="Nishikawa T."/>
            <person name="Hayashi K."/>
            <person name="Suzuki Y."/>
            <person name="Yamamoto J."/>
            <person name="Wakamatsu A."/>
            <person name="Kimura K."/>
            <person name="Sakamoto K."/>
            <person name="Hatano N."/>
            <person name="Kawai Y."/>
            <person name="Ishii S."/>
            <person name="Saito K."/>
            <person name="Kojima S."/>
            <person name="Sugiyama T."/>
            <person name="Ono T."/>
            <person name="Okano K."/>
            <person name="Yoshikawa Y."/>
            <person name="Aotsuka S."/>
            <person name="Sasaki N."/>
            <person name="Hattori A."/>
            <person name="Okumura K."/>
            <person name="Nagai K."/>
            <person name="Sugano S."/>
            <person name="Isogai T."/>
        </authorList>
    </citation>
    <scope>NUCLEOTIDE SEQUENCE [LARGE SCALE MRNA]</scope>
    <source>
        <tissue>Teratocarcinoma</tissue>
    </source>
</reference>
<reference key="6">
    <citation type="journal article" date="2005" name="Nature">
        <title>The DNA sequence of the human X chromosome.</title>
        <authorList>
            <person name="Ross M.T."/>
            <person name="Grafham D.V."/>
            <person name="Coffey A.J."/>
            <person name="Scherer S."/>
            <person name="McLay K."/>
            <person name="Muzny D."/>
            <person name="Platzer M."/>
            <person name="Howell G.R."/>
            <person name="Burrows C."/>
            <person name="Bird C.P."/>
            <person name="Frankish A."/>
            <person name="Lovell F.L."/>
            <person name="Howe K.L."/>
            <person name="Ashurst J.L."/>
            <person name="Fulton R.S."/>
            <person name="Sudbrak R."/>
            <person name="Wen G."/>
            <person name="Jones M.C."/>
            <person name="Hurles M.E."/>
            <person name="Andrews T.D."/>
            <person name="Scott C.E."/>
            <person name="Searle S."/>
            <person name="Ramser J."/>
            <person name="Whittaker A."/>
            <person name="Deadman R."/>
            <person name="Carter N.P."/>
            <person name="Hunt S.E."/>
            <person name="Chen R."/>
            <person name="Cree A."/>
            <person name="Gunaratne P."/>
            <person name="Havlak P."/>
            <person name="Hodgson A."/>
            <person name="Metzker M.L."/>
            <person name="Richards S."/>
            <person name="Scott G."/>
            <person name="Steffen D."/>
            <person name="Sodergren E."/>
            <person name="Wheeler D.A."/>
            <person name="Worley K.C."/>
            <person name="Ainscough R."/>
            <person name="Ambrose K.D."/>
            <person name="Ansari-Lari M.A."/>
            <person name="Aradhya S."/>
            <person name="Ashwell R.I."/>
            <person name="Babbage A.K."/>
            <person name="Bagguley C.L."/>
            <person name="Ballabio A."/>
            <person name="Banerjee R."/>
            <person name="Barker G.E."/>
            <person name="Barlow K.F."/>
            <person name="Barrett I.P."/>
            <person name="Bates K.N."/>
            <person name="Beare D.M."/>
            <person name="Beasley H."/>
            <person name="Beasley O."/>
            <person name="Beck A."/>
            <person name="Bethel G."/>
            <person name="Blechschmidt K."/>
            <person name="Brady N."/>
            <person name="Bray-Allen S."/>
            <person name="Bridgeman A.M."/>
            <person name="Brown A.J."/>
            <person name="Brown M.J."/>
            <person name="Bonnin D."/>
            <person name="Bruford E.A."/>
            <person name="Buhay C."/>
            <person name="Burch P."/>
            <person name="Burford D."/>
            <person name="Burgess J."/>
            <person name="Burrill W."/>
            <person name="Burton J."/>
            <person name="Bye J.M."/>
            <person name="Carder C."/>
            <person name="Carrel L."/>
            <person name="Chako J."/>
            <person name="Chapman J.C."/>
            <person name="Chavez D."/>
            <person name="Chen E."/>
            <person name="Chen G."/>
            <person name="Chen Y."/>
            <person name="Chen Z."/>
            <person name="Chinault C."/>
            <person name="Ciccodicola A."/>
            <person name="Clark S.Y."/>
            <person name="Clarke G."/>
            <person name="Clee C.M."/>
            <person name="Clegg S."/>
            <person name="Clerc-Blankenburg K."/>
            <person name="Clifford K."/>
            <person name="Cobley V."/>
            <person name="Cole C.G."/>
            <person name="Conquer J.S."/>
            <person name="Corby N."/>
            <person name="Connor R.E."/>
            <person name="David R."/>
            <person name="Davies J."/>
            <person name="Davis C."/>
            <person name="Davis J."/>
            <person name="Delgado O."/>
            <person name="Deshazo D."/>
            <person name="Dhami P."/>
            <person name="Ding Y."/>
            <person name="Dinh H."/>
            <person name="Dodsworth S."/>
            <person name="Draper H."/>
            <person name="Dugan-Rocha S."/>
            <person name="Dunham A."/>
            <person name="Dunn M."/>
            <person name="Durbin K.J."/>
            <person name="Dutta I."/>
            <person name="Eades T."/>
            <person name="Ellwood M."/>
            <person name="Emery-Cohen A."/>
            <person name="Errington H."/>
            <person name="Evans K.L."/>
            <person name="Faulkner L."/>
            <person name="Francis F."/>
            <person name="Frankland J."/>
            <person name="Fraser A.E."/>
            <person name="Galgoczy P."/>
            <person name="Gilbert J."/>
            <person name="Gill R."/>
            <person name="Gloeckner G."/>
            <person name="Gregory S.G."/>
            <person name="Gribble S."/>
            <person name="Griffiths C."/>
            <person name="Grocock R."/>
            <person name="Gu Y."/>
            <person name="Gwilliam R."/>
            <person name="Hamilton C."/>
            <person name="Hart E.A."/>
            <person name="Hawes A."/>
            <person name="Heath P.D."/>
            <person name="Heitmann K."/>
            <person name="Hennig S."/>
            <person name="Hernandez J."/>
            <person name="Hinzmann B."/>
            <person name="Ho S."/>
            <person name="Hoffs M."/>
            <person name="Howden P.J."/>
            <person name="Huckle E.J."/>
            <person name="Hume J."/>
            <person name="Hunt P.J."/>
            <person name="Hunt A.R."/>
            <person name="Isherwood J."/>
            <person name="Jacob L."/>
            <person name="Johnson D."/>
            <person name="Jones S."/>
            <person name="de Jong P.J."/>
            <person name="Joseph S.S."/>
            <person name="Keenan S."/>
            <person name="Kelly S."/>
            <person name="Kershaw J.K."/>
            <person name="Khan Z."/>
            <person name="Kioschis P."/>
            <person name="Klages S."/>
            <person name="Knights A.J."/>
            <person name="Kosiura A."/>
            <person name="Kovar-Smith C."/>
            <person name="Laird G.K."/>
            <person name="Langford C."/>
            <person name="Lawlor S."/>
            <person name="Leversha M."/>
            <person name="Lewis L."/>
            <person name="Liu W."/>
            <person name="Lloyd C."/>
            <person name="Lloyd D.M."/>
            <person name="Loulseged H."/>
            <person name="Loveland J.E."/>
            <person name="Lovell J.D."/>
            <person name="Lozado R."/>
            <person name="Lu J."/>
            <person name="Lyne R."/>
            <person name="Ma J."/>
            <person name="Maheshwari M."/>
            <person name="Matthews L.H."/>
            <person name="McDowall J."/>
            <person name="McLaren S."/>
            <person name="McMurray A."/>
            <person name="Meidl P."/>
            <person name="Meitinger T."/>
            <person name="Milne S."/>
            <person name="Miner G."/>
            <person name="Mistry S.L."/>
            <person name="Morgan M."/>
            <person name="Morris S."/>
            <person name="Mueller I."/>
            <person name="Mullikin J.C."/>
            <person name="Nguyen N."/>
            <person name="Nordsiek G."/>
            <person name="Nyakatura G."/>
            <person name="O'dell C.N."/>
            <person name="Okwuonu G."/>
            <person name="Palmer S."/>
            <person name="Pandian R."/>
            <person name="Parker D."/>
            <person name="Parrish J."/>
            <person name="Pasternak S."/>
            <person name="Patel D."/>
            <person name="Pearce A.V."/>
            <person name="Pearson D.M."/>
            <person name="Pelan S.E."/>
            <person name="Perez L."/>
            <person name="Porter K.M."/>
            <person name="Ramsey Y."/>
            <person name="Reichwald K."/>
            <person name="Rhodes S."/>
            <person name="Ridler K.A."/>
            <person name="Schlessinger D."/>
            <person name="Schueler M.G."/>
            <person name="Sehra H.K."/>
            <person name="Shaw-Smith C."/>
            <person name="Shen H."/>
            <person name="Sheridan E.M."/>
            <person name="Shownkeen R."/>
            <person name="Skuce C.D."/>
            <person name="Smith M.L."/>
            <person name="Sotheran E.C."/>
            <person name="Steingruber H.E."/>
            <person name="Steward C.A."/>
            <person name="Storey R."/>
            <person name="Swann R.M."/>
            <person name="Swarbreck D."/>
            <person name="Tabor P.E."/>
            <person name="Taudien S."/>
            <person name="Taylor T."/>
            <person name="Teague B."/>
            <person name="Thomas K."/>
            <person name="Thorpe A."/>
            <person name="Timms K."/>
            <person name="Tracey A."/>
            <person name="Trevanion S."/>
            <person name="Tromans A.C."/>
            <person name="d'Urso M."/>
            <person name="Verduzco D."/>
            <person name="Villasana D."/>
            <person name="Waldron L."/>
            <person name="Wall M."/>
            <person name="Wang Q."/>
            <person name="Warren J."/>
            <person name="Warry G.L."/>
            <person name="Wei X."/>
            <person name="West A."/>
            <person name="Whitehead S.L."/>
            <person name="Whiteley M.N."/>
            <person name="Wilkinson J.E."/>
            <person name="Willey D.L."/>
            <person name="Williams G."/>
            <person name="Williams L."/>
            <person name="Williamson A."/>
            <person name="Williamson H."/>
            <person name="Wilming L."/>
            <person name="Woodmansey R.L."/>
            <person name="Wray P.W."/>
            <person name="Yen J."/>
            <person name="Zhang J."/>
            <person name="Zhou J."/>
            <person name="Zoghbi H."/>
            <person name="Zorilla S."/>
            <person name="Buck D."/>
            <person name="Reinhardt R."/>
            <person name="Poustka A."/>
            <person name="Rosenthal A."/>
            <person name="Lehrach H."/>
            <person name="Meindl A."/>
            <person name="Minx P.J."/>
            <person name="Hillier L.W."/>
            <person name="Willard H.F."/>
            <person name="Wilson R.K."/>
            <person name="Waterston R.H."/>
            <person name="Rice C.M."/>
            <person name="Vaudin M."/>
            <person name="Coulson A."/>
            <person name="Nelson D.L."/>
            <person name="Weinstock G."/>
            <person name="Sulston J.E."/>
            <person name="Durbin R.M."/>
            <person name="Hubbard T."/>
            <person name="Gibbs R.A."/>
            <person name="Beck S."/>
            <person name="Rogers J."/>
            <person name="Bentley D.R."/>
        </authorList>
    </citation>
    <scope>NUCLEOTIDE SEQUENCE [LARGE SCALE GENOMIC DNA]</scope>
</reference>
<reference key="7">
    <citation type="submission" date="2005-09" db="EMBL/GenBank/DDBJ databases">
        <authorList>
            <person name="Mural R.J."/>
            <person name="Istrail S."/>
            <person name="Sutton G."/>
            <person name="Florea L."/>
            <person name="Halpern A.L."/>
            <person name="Mobarry C.M."/>
            <person name="Lippert R."/>
            <person name="Walenz B."/>
            <person name="Shatkay H."/>
            <person name="Dew I."/>
            <person name="Miller J.R."/>
            <person name="Flanigan M.J."/>
            <person name="Edwards N.J."/>
            <person name="Bolanos R."/>
            <person name="Fasulo D."/>
            <person name="Halldorsson B.V."/>
            <person name="Hannenhalli S."/>
            <person name="Turner R."/>
            <person name="Yooseph S."/>
            <person name="Lu F."/>
            <person name="Nusskern D.R."/>
            <person name="Shue B.C."/>
            <person name="Zheng X.H."/>
            <person name="Zhong F."/>
            <person name="Delcher A.L."/>
            <person name="Huson D.H."/>
            <person name="Kravitz S.A."/>
            <person name="Mouchard L."/>
            <person name="Reinert K."/>
            <person name="Remington K.A."/>
            <person name="Clark A.G."/>
            <person name="Waterman M.S."/>
            <person name="Eichler E.E."/>
            <person name="Adams M.D."/>
            <person name="Hunkapiller M.W."/>
            <person name="Myers E.W."/>
            <person name="Venter J.C."/>
        </authorList>
    </citation>
    <scope>NUCLEOTIDE SEQUENCE [LARGE SCALE GENOMIC DNA]</scope>
</reference>
<reference key="8">
    <citation type="journal article" date="2004" name="Genome Res.">
        <title>The status, quality, and expansion of the NIH full-length cDNA project: the Mammalian Gene Collection (MGC).</title>
        <authorList>
            <consortium name="The MGC Project Team"/>
        </authorList>
    </citation>
    <scope>NUCLEOTIDE SEQUENCE [LARGE SCALE MRNA]</scope>
    <source>
        <tissue>Colon</tissue>
        <tissue>Skin</tissue>
    </source>
</reference>
<reference key="9">
    <citation type="journal article" date="2010" name="J. Cell Sci.">
        <title>Claudin-2, a component of the tight junction, forms a paracellular water channel.</title>
        <authorList>
            <person name="Rosenthal R."/>
            <person name="Milatz S."/>
            <person name="Krug S.M."/>
            <person name="Oelrich B."/>
            <person name="Schulzke J.D."/>
            <person name="Amasheh S."/>
            <person name="Guenzel D."/>
            <person name="Fromm M."/>
        </authorList>
    </citation>
    <scope>FUNCTION</scope>
    <scope>TRANSPORTER ACTIVITY</scope>
    <scope>SUBCELLULAR LOCATION</scope>
</reference>
<reference key="10">
    <citation type="journal article" date="2012" name="Ann. N. Y. Acad. Sci.">
        <title>SUMOylation of claudin-2.</title>
        <authorList>
            <person name="Van Itallie C.M."/>
            <person name="Mitic L.L."/>
            <person name="Anderson J.M."/>
        </authorList>
    </citation>
    <scope>SUMOYLATION AT LYS-218</scope>
</reference>
<reference key="11">
    <citation type="journal article" date="2022" name="Nat. Commun.">
        <title>Nanoscale segregation of channel and barrier claudins enables paracellular ion flux.</title>
        <authorList>
            <person name="Gonschior H."/>
            <person name="Schmied C."/>
            <person name="Van der Veen R.E."/>
            <person name="Eichhorst J."/>
            <person name="Himmerkus N."/>
            <person name="Piontek J."/>
            <person name="Guenzel D."/>
            <person name="Bleich M."/>
            <person name="Furuse M."/>
            <person name="Haucke V."/>
            <person name="Lehmann M."/>
        </authorList>
    </citation>
    <scope>FUNCTION</scope>
    <scope>TRANSPORTER ACTIVITY</scope>
    <scope>SUBUNIT</scope>
    <scope>INTERACTION WITH CLDN3</scope>
</reference>
<reference key="12">
    <citation type="journal article" date="2019" name="J. Hum. Genet.">
        <title>Identification of a missense variant in CLDN2 in obstructive azoospermia.</title>
        <authorList>
            <person name="Askari M."/>
            <person name="Karamzadeh R."/>
            <person name="Ansari-Pour N."/>
            <person name="Karimi-Jafari M.H."/>
            <person name="Almadani N."/>
            <person name="Sadighi Gilani M.A."/>
            <person name="Gourabi H."/>
            <person name="Vosough Taghi Dizaj A."/>
            <person name="Mohseni Meybodi A."/>
            <person name="Sadeghi M."/>
            <person name="Bashamboo A."/>
            <person name="McElreavey K."/>
            <person name="Totonchi M."/>
        </authorList>
    </citation>
    <scope>INVOLVEMENT IN OAZON</scope>
    <scope>VARIANT OAZON ARG-161</scope>
</reference>
<feature type="chain" id="PRO_0000144734" description="Claudin-2">
    <location>
        <begin position="1"/>
        <end position="230"/>
    </location>
</feature>
<feature type="topological domain" description="Cytoplasmic" evidence="3">
    <location>
        <begin position="1"/>
        <end position="7"/>
    </location>
</feature>
<feature type="transmembrane region" description="Helical" evidence="3">
    <location>
        <begin position="8"/>
        <end position="28"/>
    </location>
</feature>
<feature type="topological domain" description="Extracellular" evidence="3">
    <location>
        <begin position="29"/>
        <end position="81"/>
    </location>
</feature>
<feature type="transmembrane region" description="Helical" evidence="3">
    <location>
        <begin position="82"/>
        <end position="102"/>
    </location>
</feature>
<feature type="topological domain" description="Cytoplasmic" evidence="3">
    <location>
        <begin position="103"/>
        <end position="116"/>
    </location>
</feature>
<feature type="transmembrane region" description="Helical" evidence="3">
    <location>
        <begin position="117"/>
        <end position="137"/>
    </location>
</feature>
<feature type="topological domain" description="Extracellular" evidence="3">
    <location>
        <begin position="138"/>
        <end position="162"/>
    </location>
</feature>
<feature type="transmembrane region" description="Helical" evidence="3">
    <location>
        <begin position="163"/>
        <end position="183"/>
    </location>
</feature>
<feature type="topological domain" description="Cytoplasmic" evidence="3">
    <location>
        <begin position="184"/>
        <end position="230"/>
    </location>
</feature>
<feature type="region of interest" description="Disordered" evidence="4">
    <location>
        <begin position="205"/>
        <end position="230"/>
    </location>
</feature>
<feature type="region of interest" description="Interactions with TJP1, TJP2 and TJP3" evidence="1">
    <location>
        <begin position="229"/>
        <end position="230"/>
    </location>
</feature>
<feature type="compositionally biased region" description="Polar residues" evidence="4">
    <location>
        <begin position="220"/>
        <end position="230"/>
    </location>
</feature>
<feature type="site" description="Paracellular cation selectivity" evidence="2">
    <location>
        <position position="65"/>
    </location>
</feature>
<feature type="modified residue" description="Phosphoserine" evidence="2">
    <location>
        <position position="219"/>
    </location>
</feature>
<feature type="modified residue" description="Phosphoserine" evidence="2">
    <location>
        <position position="223"/>
    </location>
</feature>
<feature type="disulfide bond" evidence="2">
    <location>
        <begin position="54"/>
        <end position="64"/>
    </location>
</feature>
<feature type="cross-link" description="Glycyl lysine isopeptide (Lys-Gly) (interchain with G-Cter in SUMO)" evidence="6">
    <location>
        <position position="218"/>
    </location>
</feature>
<feature type="sequence variant" id="VAR_085653" description="In OAZON; uncertain significance." evidence="7">
    <original>G</original>
    <variation>R</variation>
    <location>
        <position position="161"/>
    </location>
</feature>
<feature type="helix" evidence="13">
    <location>
        <begin position="196"/>
        <end position="203"/>
    </location>
</feature>
<feature type="strand" evidence="13">
    <location>
        <begin position="210"/>
        <end position="218"/>
    </location>
</feature>
<dbReference type="EMBL" id="AF250558">
    <property type="protein sequence ID" value="AAF98151.1"/>
    <property type="molecule type" value="mRNA"/>
</dbReference>
<dbReference type="EMBL" id="AY358474">
    <property type="protein sequence ID" value="AAQ88838.1"/>
    <property type="molecule type" value="mRNA"/>
</dbReference>
<dbReference type="EMBL" id="AK312515">
    <property type="protein sequence ID" value="BAG35416.1"/>
    <property type="molecule type" value="mRNA"/>
</dbReference>
<dbReference type="EMBL" id="AF177340">
    <property type="protein sequence ID" value="AAG17984.1"/>
    <property type="molecule type" value="mRNA"/>
</dbReference>
<dbReference type="EMBL" id="AK075371">
    <property type="protein sequence ID" value="BAC11575.1"/>
    <property type="molecule type" value="mRNA"/>
</dbReference>
<dbReference type="EMBL" id="AK075405">
    <property type="protein sequence ID" value="BAG52130.1"/>
    <property type="molecule type" value="mRNA"/>
</dbReference>
<dbReference type="EMBL" id="AL158821">
    <property type="status" value="NOT_ANNOTATED_CDS"/>
    <property type="molecule type" value="Genomic_DNA"/>
</dbReference>
<dbReference type="EMBL" id="CH471120">
    <property type="protein sequence ID" value="EAX02730.1"/>
    <property type="molecule type" value="Genomic_DNA"/>
</dbReference>
<dbReference type="EMBL" id="CH471120">
    <property type="protein sequence ID" value="EAX02731.1"/>
    <property type="molecule type" value="Genomic_DNA"/>
</dbReference>
<dbReference type="EMBL" id="BC014424">
    <property type="protein sequence ID" value="AAH14424.1"/>
    <property type="molecule type" value="mRNA"/>
</dbReference>
<dbReference type="EMBL" id="BC071747">
    <property type="protein sequence ID" value="AAH71747.1"/>
    <property type="molecule type" value="mRNA"/>
</dbReference>
<dbReference type="CCDS" id="CCDS14524.1"/>
<dbReference type="RefSeq" id="NP_001164563.1">
    <property type="nucleotide sequence ID" value="NM_001171092.1"/>
</dbReference>
<dbReference type="RefSeq" id="NP_001164566.1">
    <property type="nucleotide sequence ID" value="NM_001171095.2"/>
</dbReference>
<dbReference type="RefSeq" id="NP_065117.1">
    <property type="nucleotide sequence ID" value="NM_020384.4"/>
</dbReference>
<dbReference type="RefSeq" id="XP_054184059.1">
    <property type="nucleotide sequence ID" value="XM_054328084.1"/>
</dbReference>
<dbReference type="RefSeq" id="XP_054184060.1">
    <property type="nucleotide sequence ID" value="XM_054328085.1"/>
</dbReference>
<dbReference type="PDB" id="4YYX">
    <property type="method" value="X-ray"/>
    <property type="resolution" value="1.79 A"/>
    <property type="chains" value="A/B=224-230"/>
</dbReference>
<dbReference type="PDBsum" id="4YYX"/>
<dbReference type="SMR" id="P57739"/>
<dbReference type="BioGRID" id="114532">
    <property type="interactions" value="30"/>
</dbReference>
<dbReference type="FunCoup" id="P57739">
    <property type="interactions" value="381"/>
</dbReference>
<dbReference type="IntAct" id="P57739">
    <property type="interactions" value="28"/>
</dbReference>
<dbReference type="MINT" id="P57739"/>
<dbReference type="STRING" id="9606.ENSP00000336571"/>
<dbReference type="iPTMnet" id="P57739"/>
<dbReference type="PhosphoSitePlus" id="P57739"/>
<dbReference type="SwissPalm" id="P57739"/>
<dbReference type="BioMuta" id="CLDN2"/>
<dbReference type="DMDM" id="12229749"/>
<dbReference type="jPOST" id="P57739"/>
<dbReference type="MassIVE" id="P57739"/>
<dbReference type="PaxDb" id="9606-ENSP00000441283"/>
<dbReference type="PeptideAtlas" id="P57739"/>
<dbReference type="ProteomicsDB" id="57027"/>
<dbReference type="Antibodypedia" id="3617">
    <property type="antibodies" value="581 antibodies from 34 providers"/>
</dbReference>
<dbReference type="DNASU" id="9075"/>
<dbReference type="Ensembl" id="ENST00000336803.2">
    <property type="protein sequence ID" value="ENSP00000336571.1"/>
    <property type="gene ID" value="ENSG00000165376.12"/>
</dbReference>
<dbReference type="Ensembl" id="ENST00000540876.1">
    <property type="protein sequence ID" value="ENSP00000443230.1"/>
    <property type="gene ID" value="ENSG00000165376.12"/>
</dbReference>
<dbReference type="Ensembl" id="ENST00000541806.6">
    <property type="protein sequence ID" value="ENSP00000441283.1"/>
    <property type="gene ID" value="ENSG00000165376.12"/>
</dbReference>
<dbReference type="GeneID" id="9075"/>
<dbReference type="KEGG" id="hsa:9075"/>
<dbReference type="MANE-Select" id="ENST00000336803.2">
    <property type="protein sequence ID" value="ENSP00000336571.1"/>
    <property type="RefSeq nucleotide sequence ID" value="NM_020384.4"/>
    <property type="RefSeq protein sequence ID" value="NP_065117.1"/>
</dbReference>
<dbReference type="UCSC" id="uc004emq.2">
    <property type="organism name" value="human"/>
</dbReference>
<dbReference type="AGR" id="HGNC:2041"/>
<dbReference type="CTD" id="9075"/>
<dbReference type="DisGeNET" id="9075"/>
<dbReference type="GeneCards" id="CLDN2"/>
<dbReference type="GeneReviews" id="CLDN2"/>
<dbReference type="HGNC" id="HGNC:2041">
    <property type="gene designation" value="CLDN2"/>
</dbReference>
<dbReference type="HPA" id="ENSG00000165376">
    <property type="expression patterns" value="Tissue enhanced (choroid plexus, gallbladder, kidney, seminal vesicle)"/>
</dbReference>
<dbReference type="MalaCards" id="CLDN2"/>
<dbReference type="MIM" id="300520">
    <property type="type" value="gene"/>
</dbReference>
<dbReference type="MIM" id="301060">
    <property type="type" value="phenotype"/>
</dbReference>
<dbReference type="neXtProt" id="NX_P57739"/>
<dbReference type="OpenTargets" id="ENSG00000165376"/>
<dbReference type="PharmGKB" id="PA26567"/>
<dbReference type="VEuPathDB" id="HostDB:ENSG00000165376"/>
<dbReference type="eggNOG" id="ENOG502R10A">
    <property type="taxonomic scope" value="Eukaryota"/>
</dbReference>
<dbReference type="GeneTree" id="ENSGT00940000160785"/>
<dbReference type="HOGENOM" id="CLU_076370_1_2_1"/>
<dbReference type="InParanoid" id="P57739"/>
<dbReference type="OMA" id="FIPVVWN"/>
<dbReference type="OrthoDB" id="9446875at2759"/>
<dbReference type="PAN-GO" id="P57739">
    <property type="GO annotations" value="4 GO annotations based on evolutionary models"/>
</dbReference>
<dbReference type="PhylomeDB" id="P57739"/>
<dbReference type="TreeFam" id="TF331936"/>
<dbReference type="PathwayCommons" id="P57739"/>
<dbReference type="Reactome" id="R-HSA-420029">
    <property type="pathway name" value="Tight junction interactions"/>
</dbReference>
<dbReference type="SignaLink" id="P57739"/>
<dbReference type="SIGNOR" id="P57739"/>
<dbReference type="BioGRID-ORCS" id="9075">
    <property type="hits" value="13 hits in 758 CRISPR screens"/>
</dbReference>
<dbReference type="ChiTaRS" id="CLDN2">
    <property type="organism name" value="human"/>
</dbReference>
<dbReference type="EvolutionaryTrace" id="P57739"/>
<dbReference type="GeneWiki" id="CLDN2"/>
<dbReference type="GenomeRNAi" id="9075"/>
<dbReference type="Pharos" id="P57739">
    <property type="development level" value="Tbio"/>
</dbReference>
<dbReference type="PRO" id="PR:P57739"/>
<dbReference type="Proteomes" id="UP000005640">
    <property type="component" value="Chromosome X"/>
</dbReference>
<dbReference type="RNAct" id="P57739">
    <property type="molecule type" value="protein"/>
</dbReference>
<dbReference type="Bgee" id="ENSG00000165376">
    <property type="expression patterns" value="Expressed in kidney epithelium and 90 other cell types or tissues"/>
</dbReference>
<dbReference type="GO" id="GO:0005923">
    <property type="term" value="C:bicellular tight junction"/>
    <property type="evidence" value="ECO:0000250"/>
    <property type="project" value="UniProtKB"/>
</dbReference>
<dbReference type="GO" id="GO:0030054">
    <property type="term" value="C:cell junction"/>
    <property type="evidence" value="ECO:0000314"/>
    <property type="project" value="HPA"/>
</dbReference>
<dbReference type="GO" id="GO:0005911">
    <property type="term" value="C:cell-cell junction"/>
    <property type="evidence" value="ECO:0000314"/>
    <property type="project" value="ARUK-UCL"/>
</dbReference>
<dbReference type="GO" id="GO:0043231">
    <property type="term" value="C:intracellular membrane-bounded organelle"/>
    <property type="evidence" value="ECO:0000314"/>
    <property type="project" value="HPA"/>
</dbReference>
<dbReference type="GO" id="GO:0005654">
    <property type="term" value="C:nucleoplasm"/>
    <property type="evidence" value="ECO:0000314"/>
    <property type="project" value="HPA"/>
</dbReference>
<dbReference type="GO" id="GO:0005886">
    <property type="term" value="C:plasma membrane"/>
    <property type="evidence" value="ECO:0000314"/>
    <property type="project" value="HPA"/>
</dbReference>
<dbReference type="GO" id="GO:0070160">
    <property type="term" value="C:tight junction"/>
    <property type="evidence" value="ECO:0000314"/>
    <property type="project" value="UniProtKB"/>
</dbReference>
<dbReference type="GO" id="GO:0042802">
    <property type="term" value="F:identical protein binding"/>
    <property type="evidence" value="ECO:0000314"/>
    <property type="project" value="UniProtKB"/>
</dbReference>
<dbReference type="GO" id="GO:0160187">
    <property type="term" value="F:paracellular tight junction channel activity"/>
    <property type="evidence" value="ECO:0000314"/>
    <property type="project" value="UniProtKB"/>
</dbReference>
<dbReference type="GO" id="GO:0005198">
    <property type="term" value="F:structural molecule activity"/>
    <property type="evidence" value="ECO:0007669"/>
    <property type="project" value="InterPro"/>
</dbReference>
<dbReference type="GO" id="GO:0070830">
    <property type="term" value="P:bicellular tight junction assembly"/>
    <property type="evidence" value="ECO:0000318"/>
    <property type="project" value="GO_Central"/>
</dbReference>
<dbReference type="GO" id="GO:0016338">
    <property type="term" value="P:calcium-independent cell-cell adhesion via plasma membrane cell-adhesion molecules"/>
    <property type="evidence" value="ECO:0000250"/>
    <property type="project" value="UniProtKB"/>
</dbReference>
<dbReference type="GO" id="GO:0098609">
    <property type="term" value="P:cell-cell adhesion"/>
    <property type="evidence" value="ECO:0000250"/>
    <property type="project" value="UniProtKB"/>
</dbReference>
<dbReference type="GO" id="GO:0002227">
    <property type="term" value="P:innate immune response in mucosa"/>
    <property type="evidence" value="ECO:0000250"/>
    <property type="project" value="UniProtKB"/>
</dbReference>
<dbReference type="GO" id="GO:0160184">
    <property type="term" value="P:paracellular transport"/>
    <property type="evidence" value="ECO:0000314"/>
    <property type="project" value="UniProtKB"/>
</dbReference>
<dbReference type="GO" id="GO:0120188">
    <property type="term" value="P:regulation of bile acid secretion"/>
    <property type="evidence" value="ECO:0000250"/>
    <property type="project" value="UniProtKB"/>
</dbReference>
<dbReference type="GO" id="GO:1903985">
    <property type="term" value="P:regulation of intestinal D-glucose absorption"/>
    <property type="evidence" value="ECO:0000250"/>
    <property type="project" value="UniProtKB"/>
</dbReference>
<dbReference type="GO" id="GO:1904729">
    <property type="term" value="P:regulation of intestinal lipid absorption"/>
    <property type="evidence" value="ECO:0000250"/>
    <property type="project" value="UniProtKB"/>
</dbReference>
<dbReference type="FunFam" id="1.20.140.150:FF:000001">
    <property type="entry name" value="Claudin"/>
    <property type="match status" value="1"/>
</dbReference>
<dbReference type="Gene3D" id="1.20.140.150">
    <property type="match status" value="1"/>
</dbReference>
<dbReference type="InterPro" id="IPR006187">
    <property type="entry name" value="Claudin"/>
</dbReference>
<dbReference type="InterPro" id="IPR005411">
    <property type="entry name" value="Claudin2"/>
</dbReference>
<dbReference type="InterPro" id="IPR017974">
    <property type="entry name" value="Claudin_CS"/>
</dbReference>
<dbReference type="InterPro" id="IPR004031">
    <property type="entry name" value="PMP22/EMP/MP20/Claudin"/>
</dbReference>
<dbReference type="PANTHER" id="PTHR12002">
    <property type="entry name" value="CLAUDIN"/>
    <property type="match status" value="1"/>
</dbReference>
<dbReference type="Pfam" id="PF00822">
    <property type="entry name" value="PMP22_Claudin"/>
    <property type="match status" value="1"/>
</dbReference>
<dbReference type="PRINTS" id="PR01077">
    <property type="entry name" value="CLAUDIN"/>
</dbReference>
<dbReference type="PRINTS" id="PR01589">
    <property type="entry name" value="CLAUDIN2"/>
</dbReference>
<dbReference type="PROSITE" id="PS01346">
    <property type="entry name" value="CLAUDIN"/>
    <property type="match status" value="1"/>
</dbReference>
<sequence length="230" mass="24549">MASLGLQLVGYILGLLGLLGTLVAMLLPSWKTSSYVGASIVTAVGFSKGLWMECATHSTGITQCDIYSTLLGLPADIQAAQAMMVTSSAISSLACIISVVGMRCTVFCQESRAKDRVAVAGGVFFILGGLLGFIPVAWNLHGILRDFYSPLVPDSMKFEIGEALYLGIISSLFSLIAGIILCFSCSSQRNRSNYYDAYQAQPLATRSSPRPGQPPKVKSEFNSYSLTGYV</sequence>
<comment type="function">
    <text evidence="2 5 8">Forms paracellular channels: polymerizes in tight junction strands with cation- and water-selective channels through the strands, conveying epithelial permeability in a process known as paracellular tight junction permeability (PubMed:20460438, PubMed:36008380). In intestinal epithelium, allows for sodium and water fluxes from the peritoneal side to the lumen of the intestine to regulate nutrient absorption and clear enteric pathogens as part of mucosal immune response (By similarity). In kidney, allows passive sodium and calcium reabsorption across proximal tubules from the lumen back to the bloodstream (By similarity). In the hepatobiliary tract, allows paracellular water and cation fluxes in the hepatic perivenous areas and biliary epithelium to generate bile flow and maintain osmotic gradients (By similarity).</text>
</comment>
<comment type="catalytic activity">
    <reaction evidence="5 8">
        <text>Na(+)(in) = Na(+)(out)</text>
        <dbReference type="Rhea" id="RHEA:34963"/>
        <dbReference type="ChEBI" id="CHEBI:29101"/>
    </reaction>
</comment>
<comment type="catalytic activity">
    <reaction evidence="5">
        <text>K(+)(in) = K(+)(out)</text>
        <dbReference type="Rhea" id="RHEA:29463"/>
        <dbReference type="ChEBI" id="CHEBI:29103"/>
    </reaction>
</comment>
<comment type="catalytic activity">
    <reaction evidence="5">
        <text>Rb(+)(in) = Rb(+)(out)</text>
        <dbReference type="Rhea" id="RHEA:78547"/>
        <dbReference type="ChEBI" id="CHEBI:49847"/>
    </reaction>
</comment>
<comment type="catalytic activity">
    <reaction evidence="5">
        <text>Li(+)(in) = Li(+)(out)</text>
        <dbReference type="Rhea" id="RHEA:78551"/>
        <dbReference type="ChEBI" id="CHEBI:49713"/>
    </reaction>
</comment>
<comment type="catalytic activity">
    <reaction evidence="5">
        <text>Cs(+)(in) = Cs(+)(out)</text>
        <dbReference type="Rhea" id="RHEA:78555"/>
        <dbReference type="ChEBI" id="CHEBI:49547"/>
    </reaction>
</comment>
<comment type="catalytic activity">
    <reaction evidence="2">
        <text>Ca(2+)(in) = Ca(2+)(out)</text>
        <dbReference type="Rhea" id="RHEA:29671"/>
        <dbReference type="ChEBI" id="CHEBI:29108"/>
    </reaction>
</comment>
<comment type="catalytic activity">
    <reaction evidence="2">
        <text>methylamine(out) = methylamine(in)</text>
        <dbReference type="Rhea" id="RHEA:74391"/>
        <dbReference type="ChEBI" id="CHEBI:59338"/>
    </reaction>
</comment>
<comment type="catalytic activity">
    <reaction evidence="2">
        <text>choline(out) = choline(in)</text>
        <dbReference type="Rhea" id="RHEA:32751"/>
        <dbReference type="ChEBI" id="CHEBI:15354"/>
    </reaction>
</comment>
<comment type="catalytic activity">
    <reaction evidence="5">
        <text>H2O(in) = H2O(out)</text>
        <dbReference type="Rhea" id="RHEA:29667"/>
        <dbReference type="ChEBI" id="CHEBI:15377"/>
    </reaction>
</comment>
<comment type="subunit">
    <text evidence="2 8">Can form homo- and heteropolymers with other claudins to mediate paracellular barrier and channel functions of tight junctions in response to physiological stimuli. Homopolymers interact with CLDN3, but not CLDN1, homopolymers. Directly interacts with TJP1/ZO-1, TJP2/ZO-2 and TJP3/ZO-3.</text>
</comment>
<comment type="interaction">
    <interactant intactId="EBI-751440">
        <id>P57739</id>
    </interactant>
    <interactant intactId="EBI-10225815">
        <id>Q08AM2</id>
        <label>ADAM33</label>
    </interactant>
    <organismsDiffer>false</organismsDiffer>
    <experiments>3</experiments>
</comment>
<comment type="interaction">
    <interactant intactId="EBI-751440">
        <id>P57739</id>
    </interactant>
    <interactant intactId="EBI-297683">
        <id>Q96CW1</id>
        <label>AP2M1</label>
    </interactant>
    <organismsDiffer>false</organismsDiffer>
    <experiments>4</experiments>
</comment>
<comment type="interaction">
    <interactant intactId="EBI-751440">
        <id>P57739</id>
    </interactant>
    <interactant intactId="EBI-17564670">
        <id>P78410</id>
        <label>BTN3A2</label>
    </interactant>
    <organismsDiffer>false</organismsDiffer>
    <experiments>3</experiments>
</comment>
<comment type="interaction">
    <interactant intactId="EBI-751440">
        <id>P57739</id>
    </interactant>
    <interactant intactId="EBI-11749983">
        <id>Q9UHP7-3</id>
        <label>CLEC2D</label>
    </interactant>
    <organismsDiffer>false</organismsDiffer>
    <experiments>3</experiments>
</comment>
<comment type="interaction">
    <interactant intactId="EBI-751440">
        <id>P57739</id>
    </interactant>
    <interactant intactId="EBI-10267100">
        <id>Q8N6G5</id>
        <label>CSGALNACT2</label>
    </interactant>
    <organismsDiffer>false</organismsDiffer>
    <experiments>3</experiments>
</comment>
<comment type="interaction">
    <interactant intactId="EBI-751440">
        <id>P57739</id>
    </interactant>
    <interactant intactId="EBI-3911467">
        <id>Q07325</id>
        <label>CXCL9</label>
    </interactant>
    <organismsDiffer>false</organismsDiffer>
    <experiments>3</experiments>
</comment>
<comment type="interaction">
    <interactant intactId="EBI-751440">
        <id>P57739</id>
    </interactant>
    <interactant intactId="EBI-3867333">
        <id>A8MQ03</id>
        <label>CYSRT1</label>
    </interactant>
    <organismsDiffer>false</organismsDiffer>
    <experiments>3</experiments>
</comment>
<comment type="interaction">
    <interactant intactId="EBI-751440">
        <id>P57739</id>
    </interactant>
    <interactant intactId="EBI-3907816">
        <id>P54852</id>
        <label>EMP3</label>
    </interactant>
    <organismsDiffer>false</organismsDiffer>
    <experiments>3</experiments>
</comment>
<comment type="interaction">
    <interactant intactId="EBI-751440">
        <id>P57739</id>
    </interactant>
    <interactant intactId="EBI-18304435">
        <id>Q5JX71</id>
        <label>FAM209A</label>
    </interactant>
    <organismsDiffer>false</organismsDiffer>
    <experiments>3</experiments>
</comment>
<comment type="interaction">
    <interactant intactId="EBI-751440">
        <id>P57739</id>
    </interactant>
    <interactant intactId="EBI-10232876">
        <id>Q14416</id>
        <label>GRM2</label>
    </interactant>
    <organismsDiffer>false</organismsDiffer>
    <experiments>3</experiments>
</comment>
<comment type="interaction">
    <interactant intactId="EBI-751440">
        <id>P57739</id>
    </interactant>
    <interactant intactId="EBI-720480">
        <id>P24593</id>
        <label>IGFBP5</label>
    </interactant>
    <organismsDiffer>false</organismsDiffer>
    <experiments>3</experiments>
</comment>
<comment type="interaction">
    <interactant intactId="EBI-751440">
        <id>P57739</id>
    </interactant>
    <interactant intactId="EBI-19045531">
        <id>Q6UWB1</id>
        <label>IL27RA</label>
    </interactant>
    <organismsDiffer>false</organismsDiffer>
    <experiments>3</experiments>
</comment>
<comment type="interaction">
    <interactant intactId="EBI-751440">
        <id>P57739</id>
    </interactant>
    <interactant intactId="EBI-948001">
        <id>Q15323</id>
        <label>KRT31</label>
    </interactant>
    <organismsDiffer>false</organismsDiffer>
    <experiments>3</experiments>
</comment>
<comment type="interaction">
    <interactant intactId="EBI-751440">
        <id>P57739</id>
    </interactant>
    <interactant intactId="EBI-11959885">
        <id>Q07627</id>
        <label>KRTAP1-1</label>
    </interactant>
    <organismsDiffer>false</organismsDiffer>
    <experiments>3</experiments>
</comment>
<comment type="interaction">
    <interactant intactId="EBI-751440">
        <id>P57739</id>
    </interactant>
    <interactant intactId="EBI-11749135">
        <id>Q8IUG1</id>
        <label>KRTAP1-3</label>
    </interactant>
    <organismsDiffer>false</organismsDiffer>
    <experiments>3</experiments>
</comment>
<comment type="interaction">
    <interactant intactId="EBI-751440">
        <id>P57739</id>
    </interactant>
    <interactant intactId="EBI-8070286">
        <id>O43561-2</id>
        <label>LAT</label>
    </interactant>
    <organismsDiffer>false</organismsDiffer>
    <experiments>3</experiments>
</comment>
<comment type="interaction">
    <interactant intactId="EBI-751440">
        <id>P57739</id>
    </interactant>
    <interactant intactId="EBI-12033434">
        <id>Q9UBY5</id>
        <label>LPAR3</label>
    </interactant>
    <organismsDiffer>false</organismsDiffer>
    <experiments>3</experiments>
</comment>
<comment type="interaction">
    <interactant intactId="EBI-751440">
        <id>P57739</id>
    </interactant>
    <interactant intactId="EBI-945833">
        <id>Q7Z3S9</id>
        <label>NOTCH2NLA</label>
    </interactant>
    <organismsDiffer>false</organismsDiffer>
    <experiments>3</experiments>
</comment>
<comment type="interaction">
    <interactant intactId="EBI-751440">
        <id>P57739</id>
    </interactant>
    <interactant intactId="EBI-12188331">
        <id>P60201-2</id>
        <label>PLP1</label>
    </interactant>
    <organismsDiffer>false</organismsDiffer>
    <experiments>3</experiments>
</comment>
<comment type="interaction">
    <interactant intactId="EBI-751440">
        <id>P57739</id>
    </interactant>
    <interactant intactId="EBI-307104">
        <id>Q13501</id>
        <label>SQSTM1</label>
    </interactant>
    <organismsDiffer>false</organismsDiffer>
    <experiments>4</experiments>
</comment>
<comment type="interaction">
    <interactant intactId="EBI-751440">
        <id>P57739</id>
    </interactant>
    <interactant intactId="EBI-10329860">
        <id>Q9Y6I9</id>
        <label>TEX264</label>
    </interactant>
    <organismsDiffer>false</organismsDiffer>
    <experiments>3</experiments>
</comment>
<comment type="interaction">
    <interactant intactId="EBI-751440">
        <id>P57739</id>
    </interactant>
    <interactant intactId="EBI-10173151">
        <id>A2RU14</id>
        <label>TMEM218</label>
    </interactant>
    <organismsDiffer>false</organismsDiffer>
    <experiments>3</experiments>
</comment>
<comment type="subcellular location">
    <subcellularLocation>
        <location evidence="5">Cell junction</location>
        <location evidence="5">Tight junction</location>
    </subcellularLocation>
    <subcellularLocation>
        <location evidence="2">Cell membrane</location>
        <topology evidence="3">Multi-pass membrane protein</topology>
    </subcellularLocation>
</comment>
<comment type="PTM">
    <text evidence="2">The disulfide bond is necessary for pore formation, but is not required for correct protein trafficking.</text>
</comment>
<comment type="disease" evidence="7">
    <disease id="DI-06054">
        <name>Azoospermia, obstructive, with nephrolithiasis</name>
        <acronym>OAZON</acronym>
        <description>An X-linked recessive, male infertility disorder characterized by epidydimal obstruction, hypercalciuria and kidney stones.</description>
        <dbReference type="MIM" id="301060"/>
    </disease>
    <text>The disease may be caused by variants affecting the gene represented in this entry.</text>
</comment>
<comment type="similarity">
    <text evidence="11">Belongs to the claudin family.</text>
</comment>
<accession>P57739</accession>
<accession>B2R6B9</accession>
<evidence type="ECO:0000250" key="1"/>
<evidence type="ECO:0000250" key="2">
    <source>
        <dbReference type="UniProtKB" id="O88552"/>
    </source>
</evidence>
<evidence type="ECO:0000255" key="3"/>
<evidence type="ECO:0000256" key="4">
    <source>
        <dbReference type="SAM" id="MobiDB-lite"/>
    </source>
</evidence>
<evidence type="ECO:0000269" key="5">
    <source>
    </source>
</evidence>
<evidence type="ECO:0000269" key="6">
    <source>
    </source>
</evidence>
<evidence type="ECO:0000269" key="7">
    <source>
    </source>
</evidence>
<evidence type="ECO:0000269" key="8">
    <source>
    </source>
</evidence>
<evidence type="ECO:0000303" key="9">
    <source>
    </source>
</evidence>
<evidence type="ECO:0000303" key="10">
    <source>
    </source>
</evidence>
<evidence type="ECO:0000305" key="11"/>
<evidence type="ECO:0000312" key="12">
    <source>
        <dbReference type="HGNC" id="HGNC:2041"/>
    </source>
</evidence>
<evidence type="ECO:0007829" key="13">
    <source>
        <dbReference type="PDB" id="4YYX"/>
    </source>
</evidence>